<keyword id="KW-1003">Cell membrane</keyword>
<keyword id="KW-0143">Chaperone</keyword>
<keyword id="KW-0449">Lipoprotein</keyword>
<keyword id="KW-0472">Membrane</keyword>
<keyword id="KW-0564">Palmitate</keyword>
<keyword id="KW-0653">Protein transport</keyword>
<keyword id="KW-0732">Signal</keyword>
<keyword id="KW-0812">Transmembrane</keyword>
<keyword id="KW-1133">Transmembrane helix</keyword>
<keyword id="KW-0813">Transport</keyword>
<protein>
    <recommendedName>
        <fullName evidence="1">Membrane protein insertase YidC</fullName>
    </recommendedName>
    <alternativeName>
        <fullName evidence="1">Foldase YidC</fullName>
    </alternativeName>
    <alternativeName>
        <fullName evidence="1">Membrane integrase YidC</fullName>
    </alternativeName>
    <alternativeName>
        <fullName evidence="1">Membrane protein YidC</fullName>
    </alternativeName>
</protein>
<feature type="signal peptide" evidence="1">
    <location>
        <begin position="1"/>
        <end position="19"/>
    </location>
</feature>
<feature type="chain" id="PRO_1000088271" description="Membrane protein insertase YidC">
    <location>
        <begin position="20"/>
        <end position="290"/>
    </location>
</feature>
<feature type="transmembrane region" description="Helical" evidence="1">
    <location>
        <begin position="56"/>
        <end position="76"/>
    </location>
</feature>
<feature type="transmembrane region" description="Helical" evidence="1">
    <location>
        <begin position="134"/>
        <end position="154"/>
    </location>
</feature>
<feature type="transmembrane region" description="Helical" evidence="1">
    <location>
        <begin position="176"/>
        <end position="196"/>
    </location>
</feature>
<feature type="transmembrane region" description="Helical" evidence="1">
    <location>
        <begin position="207"/>
        <end position="224"/>
    </location>
</feature>
<feature type="transmembrane region" description="Helical" evidence="1">
    <location>
        <begin position="229"/>
        <end position="251"/>
    </location>
</feature>
<feature type="region of interest" description="Disordered" evidence="2">
    <location>
        <begin position="270"/>
        <end position="290"/>
    </location>
</feature>
<feature type="lipid moiety-binding region" description="N-palmitoyl cysteine" evidence="1">
    <location>
        <position position="20"/>
    </location>
</feature>
<feature type="lipid moiety-binding region" description="S-diacylglycerol cysteine" evidence="1">
    <location>
        <position position="20"/>
    </location>
</feature>
<sequence>MKKKALLPLFLGIMVFLAGCDYSKPEKRSGFFYNTFVDPMKNVLDWLGNNLLNDNYGLAIIILVLVIRIILLPFMLSNYKNSHMMRQKMKVAKPEVEKIQEKVKRARTQEEKMAANQELMQVYKKYDMNPIKSMLGCLPMLIQLPIIMGLYFVLKDQLVDGLFKYPHFLWFDLGRPDIWITIIAGVLYFIQAYVSSKTMPDEQRQMGYMMMVISPIMIIWISLSSASALGLYWSVSAAFLVVQTHFANIYYEKVAKKEVQPFIEAYEREHNGGSNKKGKNTQVVSKKKKK</sequence>
<proteinExistence type="inferred from homology"/>
<accession>A6QIT4</accession>
<gene>
    <name evidence="1" type="primary">yidC</name>
    <name type="ordered locus">NWMN_1994</name>
</gene>
<evidence type="ECO:0000255" key="1">
    <source>
        <dbReference type="HAMAP-Rule" id="MF_01811"/>
    </source>
</evidence>
<evidence type="ECO:0000256" key="2">
    <source>
        <dbReference type="SAM" id="MobiDB-lite"/>
    </source>
</evidence>
<reference key="1">
    <citation type="journal article" date="2008" name="J. Bacteriol.">
        <title>Genome sequence of Staphylococcus aureus strain Newman and comparative analysis of staphylococcal genomes: polymorphism and evolution of two major pathogenicity islands.</title>
        <authorList>
            <person name="Baba T."/>
            <person name="Bae T."/>
            <person name="Schneewind O."/>
            <person name="Takeuchi F."/>
            <person name="Hiramatsu K."/>
        </authorList>
    </citation>
    <scope>NUCLEOTIDE SEQUENCE [LARGE SCALE GENOMIC DNA]</scope>
    <source>
        <strain>Newman</strain>
    </source>
</reference>
<dbReference type="EMBL" id="AP009351">
    <property type="protein sequence ID" value="BAF68266.1"/>
    <property type="molecule type" value="Genomic_DNA"/>
</dbReference>
<dbReference type="RefSeq" id="WP_000725802.1">
    <property type="nucleotide sequence ID" value="NZ_JBBIAE010000008.1"/>
</dbReference>
<dbReference type="SMR" id="A6QIT4"/>
<dbReference type="KEGG" id="sae:NWMN_1994"/>
<dbReference type="HOGENOM" id="CLU_036138_5_2_9"/>
<dbReference type="Proteomes" id="UP000006386">
    <property type="component" value="Chromosome"/>
</dbReference>
<dbReference type="GO" id="GO:0005886">
    <property type="term" value="C:plasma membrane"/>
    <property type="evidence" value="ECO:0007669"/>
    <property type="project" value="UniProtKB-SubCell"/>
</dbReference>
<dbReference type="GO" id="GO:0032977">
    <property type="term" value="F:membrane insertase activity"/>
    <property type="evidence" value="ECO:0007669"/>
    <property type="project" value="InterPro"/>
</dbReference>
<dbReference type="GO" id="GO:0051205">
    <property type="term" value="P:protein insertion into membrane"/>
    <property type="evidence" value="ECO:0007669"/>
    <property type="project" value="TreeGrafter"/>
</dbReference>
<dbReference type="GO" id="GO:0015031">
    <property type="term" value="P:protein transport"/>
    <property type="evidence" value="ECO:0007669"/>
    <property type="project" value="UniProtKB-KW"/>
</dbReference>
<dbReference type="CDD" id="cd20070">
    <property type="entry name" value="5TM_YidC_Alb3"/>
    <property type="match status" value="1"/>
</dbReference>
<dbReference type="HAMAP" id="MF_01811">
    <property type="entry name" value="YidC_type2"/>
    <property type="match status" value="1"/>
</dbReference>
<dbReference type="InterPro" id="IPR001708">
    <property type="entry name" value="YidC/ALB3/OXA1/COX18"/>
</dbReference>
<dbReference type="InterPro" id="IPR028055">
    <property type="entry name" value="YidC/Oxa/ALB_C"/>
</dbReference>
<dbReference type="InterPro" id="IPR023060">
    <property type="entry name" value="YidC/YidC1/YidC2_Firmicutes"/>
</dbReference>
<dbReference type="InterPro" id="IPR047196">
    <property type="entry name" value="YidC_ALB_C"/>
</dbReference>
<dbReference type="NCBIfam" id="TIGR03592">
    <property type="entry name" value="yidC_oxa1_cterm"/>
    <property type="match status" value="1"/>
</dbReference>
<dbReference type="PANTHER" id="PTHR12428:SF65">
    <property type="entry name" value="CYTOCHROME C OXIDASE ASSEMBLY PROTEIN COX18, MITOCHONDRIAL"/>
    <property type="match status" value="1"/>
</dbReference>
<dbReference type="PANTHER" id="PTHR12428">
    <property type="entry name" value="OXA1"/>
    <property type="match status" value="1"/>
</dbReference>
<dbReference type="Pfam" id="PF02096">
    <property type="entry name" value="60KD_IMP"/>
    <property type="match status" value="1"/>
</dbReference>
<dbReference type="PRINTS" id="PR00701">
    <property type="entry name" value="60KDINNERMP"/>
</dbReference>
<dbReference type="PROSITE" id="PS51257">
    <property type="entry name" value="PROKAR_LIPOPROTEIN"/>
    <property type="match status" value="1"/>
</dbReference>
<organism>
    <name type="scientific">Staphylococcus aureus (strain Newman)</name>
    <dbReference type="NCBI Taxonomy" id="426430"/>
    <lineage>
        <taxon>Bacteria</taxon>
        <taxon>Bacillati</taxon>
        <taxon>Bacillota</taxon>
        <taxon>Bacilli</taxon>
        <taxon>Bacillales</taxon>
        <taxon>Staphylococcaceae</taxon>
        <taxon>Staphylococcus</taxon>
    </lineage>
</organism>
<comment type="function">
    <text evidence="1">Required for the insertion and/or proper folding and/or complex formation of integral membrane proteins into the membrane. Involved in integration of membrane proteins that insert both dependently and independently of the Sec translocase complex, as well as at least some lipoproteins.</text>
</comment>
<comment type="subcellular location">
    <subcellularLocation>
        <location evidence="1">Cell membrane</location>
        <topology evidence="1">Multi-pass membrane protein</topology>
    </subcellularLocation>
</comment>
<comment type="similarity">
    <text evidence="1">Belongs to the OXA1/ALB3/YidC family. Type 2 subfamily.</text>
</comment>
<name>YIDC_STAAE</name>